<dbReference type="EC" id="3.1.26.5" evidence="1"/>
<dbReference type="EMBL" id="CP000409">
    <property type="protein sequence ID" value="ABV73292.1"/>
    <property type="molecule type" value="Genomic_DNA"/>
</dbReference>
<dbReference type="RefSeq" id="WP_012148491.1">
    <property type="nucleotide sequence ID" value="NC_009879.1"/>
</dbReference>
<dbReference type="SMR" id="A8EY59"/>
<dbReference type="STRING" id="293613.A1E_01735"/>
<dbReference type="KEGG" id="rcm:A1E_01735"/>
<dbReference type="eggNOG" id="COG0594">
    <property type="taxonomic scope" value="Bacteria"/>
</dbReference>
<dbReference type="HOGENOM" id="CLU_2047938_0_0_5"/>
<dbReference type="Proteomes" id="UP000007056">
    <property type="component" value="Chromosome"/>
</dbReference>
<dbReference type="GO" id="GO:0030677">
    <property type="term" value="C:ribonuclease P complex"/>
    <property type="evidence" value="ECO:0007669"/>
    <property type="project" value="TreeGrafter"/>
</dbReference>
<dbReference type="GO" id="GO:0042781">
    <property type="term" value="F:3'-tRNA processing endoribonuclease activity"/>
    <property type="evidence" value="ECO:0007669"/>
    <property type="project" value="TreeGrafter"/>
</dbReference>
<dbReference type="GO" id="GO:0004526">
    <property type="term" value="F:ribonuclease P activity"/>
    <property type="evidence" value="ECO:0007669"/>
    <property type="project" value="UniProtKB-UniRule"/>
</dbReference>
<dbReference type="GO" id="GO:0000049">
    <property type="term" value="F:tRNA binding"/>
    <property type="evidence" value="ECO:0007669"/>
    <property type="project" value="UniProtKB-UniRule"/>
</dbReference>
<dbReference type="GO" id="GO:0001682">
    <property type="term" value="P:tRNA 5'-leader removal"/>
    <property type="evidence" value="ECO:0007669"/>
    <property type="project" value="UniProtKB-UniRule"/>
</dbReference>
<dbReference type="Gene3D" id="3.30.230.10">
    <property type="match status" value="1"/>
</dbReference>
<dbReference type="HAMAP" id="MF_00227">
    <property type="entry name" value="RNase_P"/>
    <property type="match status" value="1"/>
</dbReference>
<dbReference type="InterPro" id="IPR020568">
    <property type="entry name" value="Ribosomal_Su5_D2-typ_SF"/>
</dbReference>
<dbReference type="InterPro" id="IPR014721">
    <property type="entry name" value="Ribsml_uS5_D2-typ_fold_subgr"/>
</dbReference>
<dbReference type="InterPro" id="IPR000100">
    <property type="entry name" value="RNase_P"/>
</dbReference>
<dbReference type="InterPro" id="IPR020539">
    <property type="entry name" value="RNase_P_CS"/>
</dbReference>
<dbReference type="NCBIfam" id="TIGR00188">
    <property type="entry name" value="rnpA"/>
    <property type="match status" value="1"/>
</dbReference>
<dbReference type="PANTHER" id="PTHR33992">
    <property type="entry name" value="RIBONUCLEASE P PROTEIN COMPONENT"/>
    <property type="match status" value="1"/>
</dbReference>
<dbReference type="PANTHER" id="PTHR33992:SF1">
    <property type="entry name" value="RIBONUCLEASE P PROTEIN COMPONENT"/>
    <property type="match status" value="1"/>
</dbReference>
<dbReference type="Pfam" id="PF00825">
    <property type="entry name" value="Ribonuclease_P"/>
    <property type="match status" value="1"/>
</dbReference>
<dbReference type="SUPFAM" id="SSF54211">
    <property type="entry name" value="Ribosomal protein S5 domain 2-like"/>
    <property type="match status" value="1"/>
</dbReference>
<dbReference type="PROSITE" id="PS00648">
    <property type="entry name" value="RIBONUCLEASE_P"/>
    <property type="match status" value="1"/>
</dbReference>
<accession>A8EY59</accession>
<organism>
    <name type="scientific">Rickettsia canadensis (strain McKiel)</name>
    <dbReference type="NCBI Taxonomy" id="293613"/>
    <lineage>
        <taxon>Bacteria</taxon>
        <taxon>Pseudomonadati</taxon>
        <taxon>Pseudomonadota</taxon>
        <taxon>Alphaproteobacteria</taxon>
        <taxon>Rickettsiales</taxon>
        <taxon>Rickettsiaceae</taxon>
        <taxon>Rickettsieae</taxon>
        <taxon>Rickettsia</taxon>
        <taxon>belli group</taxon>
    </lineage>
</organism>
<evidence type="ECO:0000255" key="1">
    <source>
        <dbReference type="HAMAP-Rule" id="MF_00227"/>
    </source>
</evidence>
<comment type="function">
    <text evidence="1">RNaseP catalyzes the removal of the 5'-leader sequence from pre-tRNA to produce the mature 5'-terminus. It can also cleave other RNA substrates such as 4.5S RNA. The protein component plays an auxiliary but essential role in vivo by binding to the 5'-leader sequence and broadening the substrate specificity of the ribozyme.</text>
</comment>
<comment type="catalytic activity">
    <reaction evidence="1">
        <text>Endonucleolytic cleavage of RNA, removing 5'-extranucleotides from tRNA precursor.</text>
        <dbReference type="EC" id="3.1.26.5"/>
    </reaction>
</comment>
<comment type="subunit">
    <text evidence="1">Consists of a catalytic RNA component (M1 or rnpB) and a protein subunit.</text>
</comment>
<comment type="similarity">
    <text evidence="1">Belongs to the RnpA family.</text>
</comment>
<gene>
    <name evidence="1" type="primary">rnpA</name>
    <name type="ordered locus">A1E_01735</name>
</gene>
<sequence length="118" mass="13932">MSITSLKNQKEFELINKLGKKFHERYFILVIAKNLPKIFLETKYNIFLGIKVSKKLNKKAVVRNKIKRRIRHLIRMNVSDSKLKAIKLAMIIIPRKGFEEINFSHLNDELSNIILKNI</sequence>
<name>RNPA_RICCK</name>
<proteinExistence type="inferred from homology"/>
<feature type="chain" id="PRO_1000100382" description="Ribonuclease P protein component">
    <location>
        <begin position="1"/>
        <end position="118"/>
    </location>
</feature>
<keyword id="KW-0255">Endonuclease</keyword>
<keyword id="KW-0378">Hydrolase</keyword>
<keyword id="KW-0540">Nuclease</keyword>
<keyword id="KW-0694">RNA-binding</keyword>
<keyword id="KW-0819">tRNA processing</keyword>
<reference key="1">
    <citation type="submission" date="2007-09" db="EMBL/GenBank/DDBJ databases">
        <title>Complete genome sequence of Rickettsia canadensis.</title>
        <authorList>
            <person name="Madan A."/>
            <person name="Fahey J."/>
            <person name="Helton E."/>
            <person name="Ketteman M."/>
            <person name="Madan A."/>
            <person name="Rodrigues S."/>
            <person name="Sanchez A."/>
            <person name="Whiting M."/>
            <person name="Dasch G."/>
            <person name="Eremeeva M."/>
        </authorList>
    </citation>
    <scope>NUCLEOTIDE SEQUENCE [LARGE SCALE GENOMIC DNA]</scope>
    <source>
        <strain>McKiel</strain>
    </source>
</reference>
<protein>
    <recommendedName>
        <fullName evidence="1">Ribonuclease P protein component</fullName>
        <shortName evidence="1">RNase P protein</shortName>
        <shortName evidence="1">RNaseP protein</shortName>
        <ecNumber evidence="1">3.1.26.5</ecNumber>
    </recommendedName>
    <alternativeName>
        <fullName evidence="1">Protein C5</fullName>
    </alternativeName>
</protein>